<accession>Q97S56</accession>
<name>RBFA_STRPN</name>
<keyword id="KW-0963">Cytoplasm</keyword>
<keyword id="KW-1185">Reference proteome</keyword>
<keyword id="KW-0690">Ribosome biogenesis</keyword>
<gene>
    <name evidence="1" type="primary">rbfA</name>
    <name type="ordered locus">SP_0557</name>
</gene>
<proteinExistence type="inferred from homology"/>
<comment type="function">
    <text evidence="1">One of several proteins that assist in the late maturation steps of the functional core of the 30S ribosomal subunit. Associates with free 30S ribosomal subunits (but not with 30S subunits that are part of 70S ribosomes or polysomes). Required for efficient processing of 16S rRNA. May interact with the 5'-terminal helix region of 16S rRNA.</text>
</comment>
<comment type="subunit">
    <text evidence="1">Monomer. Binds 30S ribosomal subunits, but not 50S ribosomal subunits or 70S ribosomes.</text>
</comment>
<comment type="subcellular location">
    <subcellularLocation>
        <location evidence="1">Cytoplasm</location>
    </subcellularLocation>
</comment>
<comment type="similarity">
    <text evidence="1">Belongs to the RbfA family.</text>
</comment>
<evidence type="ECO:0000255" key="1">
    <source>
        <dbReference type="HAMAP-Rule" id="MF_00003"/>
    </source>
</evidence>
<protein>
    <recommendedName>
        <fullName evidence="1">Ribosome-binding factor A</fullName>
    </recommendedName>
</protein>
<organism>
    <name type="scientific">Streptococcus pneumoniae serotype 4 (strain ATCC BAA-334 / TIGR4)</name>
    <dbReference type="NCBI Taxonomy" id="170187"/>
    <lineage>
        <taxon>Bacteria</taxon>
        <taxon>Bacillati</taxon>
        <taxon>Bacillota</taxon>
        <taxon>Bacilli</taxon>
        <taxon>Lactobacillales</taxon>
        <taxon>Streptococcaceae</taxon>
        <taxon>Streptococcus</taxon>
    </lineage>
</organism>
<sequence>MANHFRTDRVGMEIKREVNEILQKKVRDPRVQGVTIIDVQMLGDLSVAKVYYTILSNLASDNQKAQIGLEKATGTIKRELGRNLKLYKIPDLTFVKDESIEYGNKIDEMLRNLDKN</sequence>
<reference key="1">
    <citation type="journal article" date="2001" name="Science">
        <title>Complete genome sequence of a virulent isolate of Streptococcus pneumoniae.</title>
        <authorList>
            <person name="Tettelin H."/>
            <person name="Nelson K.E."/>
            <person name="Paulsen I.T."/>
            <person name="Eisen J.A."/>
            <person name="Read T.D."/>
            <person name="Peterson S.N."/>
            <person name="Heidelberg J.F."/>
            <person name="DeBoy R.T."/>
            <person name="Haft D.H."/>
            <person name="Dodson R.J."/>
            <person name="Durkin A.S."/>
            <person name="Gwinn M.L."/>
            <person name="Kolonay J.F."/>
            <person name="Nelson W.C."/>
            <person name="Peterson J.D."/>
            <person name="Umayam L.A."/>
            <person name="White O."/>
            <person name="Salzberg S.L."/>
            <person name="Lewis M.R."/>
            <person name="Radune D."/>
            <person name="Holtzapple E.K."/>
            <person name="Khouri H.M."/>
            <person name="Wolf A.M."/>
            <person name="Utterback T.R."/>
            <person name="Hansen C.L."/>
            <person name="McDonald L.A."/>
            <person name="Feldblyum T.V."/>
            <person name="Angiuoli S.V."/>
            <person name="Dickinson T."/>
            <person name="Hickey E.K."/>
            <person name="Holt I.E."/>
            <person name="Loftus B.J."/>
            <person name="Yang F."/>
            <person name="Smith H.O."/>
            <person name="Venter J.C."/>
            <person name="Dougherty B.A."/>
            <person name="Morrison D.A."/>
            <person name="Hollingshead S.K."/>
            <person name="Fraser C.M."/>
        </authorList>
    </citation>
    <scope>NUCLEOTIDE SEQUENCE [LARGE SCALE GENOMIC DNA]</scope>
    <source>
        <strain>ATCC BAA-334 / TIGR4</strain>
    </source>
</reference>
<feature type="chain" id="PRO_0000102745" description="Ribosome-binding factor A">
    <location>
        <begin position="1"/>
        <end position="116"/>
    </location>
</feature>
<dbReference type="EMBL" id="AE005672">
    <property type="protein sequence ID" value="AAK74713.1"/>
    <property type="molecule type" value="Genomic_DNA"/>
</dbReference>
<dbReference type="PIR" id="H95064">
    <property type="entry name" value="H95064"/>
</dbReference>
<dbReference type="RefSeq" id="WP_001273594.1">
    <property type="nucleotide sequence ID" value="NZ_CP155539.1"/>
</dbReference>
<dbReference type="SMR" id="Q97S56"/>
<dbReference type="PaxDb" id="170187-SP_0557"/>
<dbReference type="EnsemblBacteria" id="AAK74713">
    <property type="protein sequence ID" value="AAK74713"/>
    <property type="gene ID" value="SP_0557"/>
</dbReference>
<dbReference type="KEGG" id="spn:SP_0557"/>
<dbReference type="eggNOG" id="COG0858">
    <property type="taxonomic scope" value="Bacteria"/>
</dbReference>
<dbReference type="PhylomeDB" id="Q97S56"/>
<dbReference type="BioCyc" id="SPNE170187:G1FZB-577-MONOMER"/>
<dbReference type="Proteomes" id="UP000000585">
    <property type="component" value="Chromosome"/>
</dbReference>
<dbReference type="GO" id="GO:0005829">
    <property type="term" value="C:cytosol"/>
    <property type="evidence" value="ECO:0007669"/>
    <property type="project" value="TreeGrafter"/>
</dbReference>
<dbReference type="GO" id="GO:0043024">
    <property type="term" value="F:ribosomal small subunit binding"/>
    <property type="evidence" value="ECO:0007669"/>
    <property type="project" value="TreeGrafter"/>
</dbReference>
<dbReference type="GO" id="GO:0030490">
    <property type="term" value="P:maturation of SSU-rRNA"/>
    <property type="evidence" value="ECO:0007669"/>
    <property type="project" value="UniProtKB-UniRule"/>
</dbReference>
<dbReference type="FunFam" id="3.30.300.20:FF:000012">
    <property type="entry name" value="Ribosome-binding factor A"/>
    <property type="match status" value="1"/>
</dbReference>
<dbReference type="Gene3D" id="3.30.300.20">
    <property type="match status" value="1"/>
</dbReference>
<dbReference type="HAMAP" id="MF_00003">
    <property type="entry name" value="RbfA"/>
    <property type="match status" value="1"/>
</dbReference>
<dbReference type="InterPro" id="IPR015946">
    <property type="entry name" value="KH_dom-like_a/b"/>
</dbReference>
<dbReference type="InterPro" id="IPR000238">
    <property type="entry name" value="RbfA"/>
</dbReference>
<dbReference type="InterPro" id="IPR023799">
    <property type="entry name" value="RbfA_dom_sf"/>
</dbReference>
<dbReference type="InterPro" id="IPR020053">
    <property type="entry name" value="Ribosome-bd_factorA_CS"/>
</dbReference>
<dbReference type="NCBIfam" id="TIGR00082">
    <property type="entry name" value="rbfA"/>
    <property type="match status" value="1"/>
</dbReference>
<dbReference type="PANTHER" id="PTHR33515">
    <property type="entry name" value="RIBOSOME-BINDING FACTOR A, CHLOROPLASTIC-RELATED"/>
    <property type="match status" value="1"/>
</dbReference>
<dbReference type="PANTHER" id="PTHR33515:SF1">
    <property type="entry name" value="RIBOSOME-BINDING FACTOR A, CHLOROPLASTIC-RELATED"/>
    <property type="match status" value="1"/>
</dbReference>
<dbReference type="Pfam" id="PF02033">
    <property type="entry name" value="RBFA"/>
    <property type="match status" value="1"/>
</dbReference>
<dbReference type="SUPFAM" id="SSF89919">
    <property type="entry name" value="Ribosome-binding factor A, RbfA"/>
    <property type="match status" value="1"/>
</dbReference>
<dbReference type="PROSITE" id="PS01319">
    <property type="entry name" value="RBFA"/>
    <property type="match status" value="1"/>
</dbReference>